<gene>
    <name type="primary">sec23</name>
    <name type="ORF">AFUA_1G03400</name>
</gene>
<feature type="chain" id="PRO_0000295451" description="Protein transport protein sec23">
    <location>
        <begin position="1"/>
        <end position="780"/>
    </location>
</feature>
<feature type="binding site" evidence="1">
    <location>
        <position position="63"/>
    </location>
    <ligand>
        <name>Zn(2+)</name>
        <dbReference type="ChEBI" id="CHEBI:29105"/>
    </ligand>
</feature>
<feature type="binding site" evidence="1">
    <location>
        <position position="67"/>
    </location>
    <ligand>
        <name>Zn(2+)</name>
        <dbReference type="ChEBI" id="CHEBI:29105"/>
    </ligand>
</feature>
<feature type="binding site" evidence="1">
    <location>
        <position position="86"/>
    </location>
    <ligand>
        <name>Zn(2+)</name>
        <dbReference type="ChEBI" id="CHEBI:29105"/>
    </ligand>
</feature>
<feature type="binding site" evidence="1">
    <location>
        <position position="89"/>
    </location>
    <ligand>
        <name>Zn(2+)</name>
        <dbReference type="ChEBI" id="CHEBI:29105"/>
    </ligand>
</feature>
<organism>
    <name type="scientific">Aspergillus fumigatus (strain ATCC MYA-4609 / CBS 101355 / FGSC A1100 / Af293)</name>
    <name type="common">Neosartorya fumigata</name>
    <dbReference type="NCBI Taxonomy" id="330879"/>
    <lineage>
        <taxon>Eukaryota</taxon>
        <taxon>Fungi</taxon>
        <taxon>Dikarya</taxon>
        <taxon>Ascomycota</taxon>
        <taxon>Pezizomycotina</taxon>
        <taxon>Eurotiomycetes</taxon>
        <taxon>Eurotiomycetidae</taxon>
        <taxon>Eurotiales</taxon>
        <taxon>Aspergillaceae</taxon>
        <taxon>Aspergillus</taxon>
        <taxon>Aspergillus subgen. Fumigati</taxon>
    </lineage>
</organism>
<dbReference type="EMBL" id="AAHF01000007">
    <property type="protein sequence ID" value="EAL88052.2"/>
    <property type="molecule type" value="Genomic_DNA"/>
</dbReference>
<dbReference type="RefSeq" id="XP_750090.2">
    <property type="nucleotide sequence ID" value="XM_744997.2"/>
</dbReference>
<dbReference type="SMR" id="Q4WK80"/>
<dbReference type="FunCoup" id="Q4WK80">
    <property type="interactions" value="1027"/>
</dbReference>
<dbReference type="STRING" id="330879.Q4WK80"/>
<dbReference type="EnsemblFungi" id="EAL88052">
    <property type="protein sequence ID" value="EAL88052"/>
    <property type="gene ID" value="AFUA_1G03400"/>
</dbReference>
<dbReference type="GeneID" id="3507853"/>
<dbReference type="KEGG" id="afm:AFUA_1G03400"/>
<dbReference type="eggNOG" id="KOG1986">
    <property type="taxonomic scope" value="Eukaryota"/>
</dbReference>
<dbReference type="HOGENOM" id="CLU_008658_3_0_1"/>
<dbReference type="InParanoid" id="Q4WK80"/>
<dbReference type="OMA" id="FPPHYAE"/>
<dbReference type="OrthoDB" id="10256289at2759"/>
<dbReference type="Proteomes" id="UP000002530">
    <property type="component" value="Chromosome 1"/>
</dbReference>
<dbReference type="GO" id="GO:0030127">
    <property type="term" value="C:COPII vesicle coat"/>
    <property type="evidence" value="ECO:0000318"/>
    <property type="project" value="GO_Central"/>
</dbReference>
<dbReference type="GO" id="GO:0070971">
    <property type="term" value="C:endoplasmic reticulum exit site"/>
    <property type="evidence" value="ECO:0000318"/>
    <property type="project" value="GO_Central"/>
</dbReference>
<dbReference type="GO" id="GO:0005789">
    <property type="term" value="C:endoplasmic reticulum membrane"/>
    <property type="evidence" value="ECO:0007669"/>
    <property type="project" value="UniProtKB-SubCell"/>
</dbReference>
<dbReference type="GO" id="GO:0000139">
    <property type="term" value="C:Golgi membrane"/>
    <property type="evidence" value="ECO:0007669"/>
    <property type="project" value="UniProtKB-SubCell"/>
</dbReference>
<dbReference type="GO" id="GO:0005096">
    <property type="term" value="F:GTPase activator activity"/>
    <property type="evidence" value="ECO:0000318"/>
    <property type="project" value="GO_Central"/>
</dbReference>
<dbReference type="GO" id="GO:0008270">
    <property type="term" value="F:zinc ion binding"/>
    <property type="evidence" value="ECO:0007669"/>
    <property type="project" value="InterPro"/>
</dbReference>
<dbReference type="GO" id="GO:0090110">
    <property type="term" value="P:COPII-coated vesicle cargo loading"/>
    <property type="evidence" value="ECO:0000318"/>
    <property type="project" value="GO_Central"/>
</dbReference>
<dbReference type="GO" id="GO:0006886">
    <property type="term" value="P:intracellular protein transport"/>
    <property type="evidence" value="ECO:0007669"/>
    <property type="project" value="InterPro"/>
</dbReference>
<dbReference type="CDD" id="cd01478">
    <property type="entry name" value="Sec23-like"/>
    <property type="match status" value="1"/>
</dbReference>
<dbReference type="CDD" id="cd11287">
    <property type="entry name" value="Sec23_C"/>
    <property type="match status" value="1"/>
</dbReference>
<dbReference type="FunFam" id="1.20.120.730:FF:000001">
    <property type="entry name" value="Protein transport protein SEC23"/>
    <property type="match status" value="1"/>
</dbReference>
<dbReference type="FunFam" id="2.30.30.380:FF:000001">
    <property type="entry name" value="Protein transport protein SEC23"/>
    <property type="match status" value="1"/>
</dbReference>
<dbReference type="FunFam" id="3.40.20.10:FF:000006">
    <property type="entry name" value="Protein transport protein SEC23"/>
    <property type="match status" value="1"/>
</dbReference>
<dbReference type="FunFam" id="3.40.50.410:FF:000008">
    <property type="entry name" value="Protein transport protein SEC23"/>
    <property type="match status" value="1"/>
</dbReference>
<dbReference type="Gene3D" id="2.60.40.1670">
    <property type="entry name" value="beta-sandwich domain of Sec23/24"/>
    <property type="match status" value="1"/>
</dbReference>
<dbReference type="Gene3D" id="1.20.120.730">
    <property type="entry name" value="Sec23/Sec24 helical domain"/>
    <property type="match status" value="1"/>
</dbReference>
<dbReference type="Gene3D" id="3.40.20.10">
    <property type="entry name" value="Severin"/>
    <property type="match status" value="1"/>
</dbReference>
<dbReference type="Gene3D" id="3.40.50.410">
    <property type="entry name" value="von Willebrand factor, type A domain"/>
    <property type="match status" value="1"/>
</dbReference>
<dbReference type="Gene3D" id="2.30.30.380">
    <property type="entry name" value="Zn-finger domain of Sec23/24"/>
    <property type="match status" value="1"/>
</dbReference>
<dbReference type="InterPro" id="IPR029006">
    <property type="entry name" value="ADF-H/Gelsolin-like_dom_sf"/>
</dbReference>
<dbReference type="InterPro" id="IPR007123">
    <property type="entry name" value="Gelsolin-like_dom"/>
</dbReference>
<dbReference type="InterPro" id="IPR036180">
    <property type="entry name" value="Gelsolin-like_dom_sf"/>
</dbReference>
<dbReference type="InterPro" id="IPR037364">
    <property type="entry name" value="Sec23"/>
</dbReference>
<dbReference type="InterPro" id="IPR006900">
    <property type="entry name" value="Sec23/24_helical_dom"/>
</dbReference>
<dbReference type="InterPro" id="IPR036175">
    <property type="entry name" value="Sec23/24_helical_dom_sf"/>
</dbReference>
<dbReference type="InterPro" id="IPR006896">
    <property type="entry name" value="Sec23/24_trunk_dom"/>
</dbReference>
<dbReference type="InterPro" id="IPR012990">
    <property type="entry name" value="Sec23_24_beta_S"/>
</dbReference>
<dbReference type="InterPro" id="IPR037550">
    <property type="entry name" value="Sec23_C"/>
</dbReference>
<dbReference type="InterPro" id="IPR036465">
    <property type="entry name" value="vWFA_dom_sf"/>
</dbReference>
<dbReference type="InterPro" id="IPR006895">
    <property type="entry name" value="Znf_Sec23_Sec24"/>
</dbReference>
<dbReference type="InterPro" id="IPR036174">
    <property type="entry name" value="Znf_Sec23_Sec24_sf"/>
</dbReference>
<dbReference type="PANTHER" id="PTHR11141">
    <property type="entry name" value="PROTEIN TRANSPORT PROTEIN SEC23"/>
    <property type="match status" value="1"/>
</dbReference>
<dbReference type="PANTHER" id="PTHR11141:SF0">
    <property type="entry name" value="PROTEIN TRANSPORT PROTEIN SEC23"/>
    <property type="match status" value="1"/>
</dbReference>
<dbReference type="Pfam" id="PF00626">
    <property type="entry name" value="Gelsolin"/>
    <property type="match status" value="1"/>
</dbReference>
<dbReference type="Pfam" id="PF08033">
    <property type="entry name" value="Sec23_BS"/>
    <property type="match status" value="1"/>
</dbReference>
<dbReference type="Pfam" id="PF04815">
    <property type="entry name" value="Sec23_helical"/>
    <property type="match status" value="1"/>
</dbReference>
<dbReference type="Pfam" id="PF04811">
    <property type="entry name" value="Sec23_trunk"/>
    <property type="match status" value="1"/>
</dbReference>
<dbReference type="Pfam" id="PF04810">
    <property type="entry name" value="zf-Sec23_Sec24"/>
    <property type="match status" value="1"/>
</dbReference>
<dbReference type="SUPFAM" id="SSF81995">
    <property type="entry name" value="beta-sandwich domain of Sec23/24"/>
    <property type="match status" value="1"/>
</dbReference>
<dbReference type="SUPFAM" id="SSF82754">
    <property type="entry name" value="C-terminal, gelsolin-like domain of Sec23/24"/>
    <property type="match status" value="1"/>
</dbReference>
<dbReference type="SUPFAM" id="SSF81811">
    <property type="entry name" value="Helical domain of Sec23/24"/>
    <property type="match status" value="1"/>
</dbReference>
<dbReference type="SUPFAM" id="SSF53300">
    <property type="entry name" value="vWA-like"/>
    <property type="match status" value="1"/>
</dbReference>
<dbReference type="SUPFAM" id="SSF82919">
    <property type="entry name" value="Zn-finger domain of Sec23/24"/>
    <property type="match status" value="1"/>
</dbReference>
<accession>Q4WK80</accession>
<name>SEC23_ASPFU</name>
<reference key="1">
    <citation type="journal article" date="2005" name="Nature">
        <title>Genomic sequence of the pathogenic and allergenic filamentous fungus Aspergillus fumigatus.</title>
        <authorList>
            <person name="Nierman W.C."/>
            <person name="Pain A."/>
            <person name="Anderson M.J."/>
            <person name="Wortman J.R."/>
            <person name="Kim H.S."/>
            <person name="Arroyo J."/>
            <person name="Berriman M."/>
            <person name="Abe K."/>
            <person name="Archer D.B."/>
            <person name="Bermejo C."/>
            <person name="Bennett J.W."/>
            <person name="Bowyer P."/>
            <person name="Chen D."/>
            <person name="Collins M."/>
            <person name="Coulsen R."/>
            <person name="Davies R."/>
            <person name="Dyer P.S."/>
            <person name="Farman M.L."/>
            <person name="Fedorova N."/>
            <person name="Fedorova N.D."/>
            <person name="Feldblyum T.V."/>
            <person name="Fischer R."/>
            <person name="Fosker N."/>
            <person name="Fraser A."/>
            <person name="Garcia J.L."/>
            <person name="Garcia M.J."/>
            <person name="Goble A."/>
            <person name="Goldman G.H."/>
            <person name="Gomi K."/>
            <person name="Griffith-Jones S."/>
            <person name="Gwilliam R."/>
            <person name="Haas B.J."/>
            <person name="Haas H."/>
            <person name="Harris D.E."/>
            <person name="Horiuchi H."/>
            <person name="Huang J."/>
            <person name="Humphray S."/>
            <person name="Jimenez J."/>
            <person name="Keller N."/>
            <person name="Khouri H."/>
            <person name="Kitamoto K."/>
            <person name="Kobayashi T."/>
            <person name="Konzack S."/>
            <person name="Kulkarni R."/>
            <person name="Kumagai T."/>
            <person name="Lafton A."/>
            <person name="Latge J.-P."/>
            <person name="Li W."/>
            <person name="Lord A."/>
            <person name="Lu C."/>
            <person name="Majoros W.H."/>
            <person name="May G.S."/>
            <person name="Miller B.L."/>
            <person name="Mohamoud Y."/>
            <person name="Molina M."/>
            <person name="Monod M."/>
            <person name="Mouyna I."/>
            <person name="Mulligan S."/>
            <person name="Murphy L.D."/>
            <person name="O'Neil S."/>
            <person name="Paulsen I."/>
            <person name="Penalva M.A."/>
            <person name="Pertea M."/>
            <person name="Price C."/>
            <person name="Pritchard B.L."/>
            <person name="Quail M.A."/>
            <person name="Rabbinowitsch E."/>
            <person name="Rawlins N."/>
            <person name="Rajandream M.A."/>
            <person name="Reichard U."/>
            <person name="Renauld H."/>
            <person name="Robson G.D."/>
            <person name="Rodriguez de Cordoba S."/>
            <person name="Rodriguez-Pena J.M."/>
            <person name="Ronning C.M."/>
            <person name="Rutter S."/>
            <person name="Salzberg S.L."/>
            <person name="Sanchez M."/>
            <person name="Sanchez-Ferrero J.C."/>
            <person name="Saunders D."/>
            <person name="Seeger K."/>
            <person name="Squares R."/>
            <person name="Squares S."/>
            <person name="Takeuchi M."/>
            <person name="Tekaia F."/>
            <person name="Turner G."/>
            <person name="Vazquez de Aldana C.R."/>
            <person name="Weidman J."/>
            <person name="White O."/>
            <person name="Woodward J.R."/>
            <person name="Yu J.-H."/>
            <person name="Fraser C.M."/>
            <person name="Galagan J.E."/>
            <person name="Asai K."/>
            <person name="Machida M."/>
            <person name="Hall N."/>
            <person name="Barrell B.G."/>
            <person name="Denning D.W."/>
        </authorList>
    </citation>
    <scope>NUCLEOTIDE SEQUENCE [LARGE SCALE GENOMIC DNA]</scope>
    <source>
        <strain>ATCC MYA-4609 / CBS 101355 / FGSC A1100 / Af293</strain>
    </source>
</reference>
<protein>
    <recommendedName>
        <fullName>Protein transport protein sec23</fullName>
    </recommendedName>
</protein>
<comment type="function">
    <text evidence="1">Component of the coat protein complex II (COPII) which promotes the formation of transport vesicles from the endoplasmic reticulum (ER). The coat has two main functions, the physical deformation of the endoplasmic reticulum membrane into vesicles and the selection of cargo molecules (By similarity).</text>
</comment>
<comment type="subunit">
    <text evidence="1">The COPII coat is composed of at least 5 proteins: the sec23/24 complex, the sec13/31 complex, and the protein sar1.</text>
</comment>
<comment type="subcellular location">
    <subcellularLocation>
        <location evidence="1">Cytoplasm</location>
    </subcellularLocation>
    <subcellularLocation>
        <location evidence="1">Cytoplasmic vesicle</location>
        <location evidence="1">COPII-coated vesicle membrane</location>
        <topology evidence="1">Peripheral membrane protein</topology>
        <orientation evidence="1">Cytoplasmic side</orientation>
    </subcellularLocation>
    <subcellularLocation>
        <location evidence="1">Endoplasmic reticulum membrane</location>
        <topology evidence="1">Peripheral membrane protein</topology>
        <orientation evidence="1">Cytoplasmic side</orientation>
    </subcellularLocation>
    <subcellularLocation>
        <location evidence="1">Golgi apparatus membrane</location>
        <topology evidence="1">Peripheral membrane protein</topology>
        <orientation evidence="1">Cytoplasmic side</orientation>
    </subcellularLocation>
</comment>
<comment type="similarity">
    <text evidence="2">Belongs to the SEC23/SEC24 family. SEC23 subfamily.</text>
</comment>
<keyword id="KW-0963">Cytoplasm</keyword>
<keyword id="KW-0968">Cytoplasmic vesicle</keyword>
<keyword id="KW-0256">Endoplasmic reticulum</keyword>
<keyword id="KW-0931">ER-Golgi transport</keyword>
<keyword id="KW-0333">Golgi apparatus</keyword>
<keyword id="KW-0472">Membrane</keyword>
<keyword id="KW-0479">Metal-binding</keyword>
<keyword id="KW-0653">Protein transport</keyword>
<keyword id="KW-1185">Reference proteome</keyword>
<keyword id="KW-0813">Transport</keyword>
<keyword id="KW-0862">Zinc</keyword>
<proteinExistence type="inferred from homology"/>
<sequence>MDYEALKDQWSDVEDRDGIRLSWNTFPSTRMEASRLVVPIAAVYTPLKEKPDSPLLQYEPVTCKAPCRAVLNPYANVDVRARIWICPFCLMRNPLPPHYKDITENAIPPELHPQSTTIEYQLARPAPAPPIFVYVVDTCQEEDSLKALKDTLILSLSLLPPNALVGLITYGTMAQVHELGYTECAKSYVFRGSKEYAAKQVQEMLGLLAAGPRPNMPQQPTRPPVGPAARFLLPVQQAEFQITNVLEQLQRDPWPVANDKRPLRCTGVALSVAVGLLETSFQNAGGRIMVFTSGPATEGPGHVVGPELKEPMRSHHDIDRDNIKYYKKAVKFYDALAKRAANNGHVVDIFAGCLDQVGLLEMKNLANFTGGHMLLTDSFTSSQFKQSFVRVFDKDANDNLLMGFNASLEVLTTKELKVTGLIGHAVSLNKKSSSVGETECGIGNTCAWKMCGIDPSSSYGVYFEIANQGGPAAVQPGPQRGMMQFLTYYQHASGHYHLRVTTVARPLSGPAGDPTLAQSFDQEAAAVLMARIAVYKADVDDGPDVIRWVDRMLIRLCSRFADYRKDDPTSFRLEKNFTLYPQFMFHLRRSQFLQVFNNSPDETAFYRHVLNHEDVGDALVMIQPTLDSYSLEHEGSQPVLLDSASIQPTHILLLDTFFHILIFHGETIAEWRKAGYQDQEGYENLKALLEQPKEDARELIADRFPLPRFIVCDAGGSQARFLLSKLNPSTTHTTGGYGGGVTSQTIFTDDVSLQTFMDHLMKYVIRKCFTNVMNEANPPI</sequence>
<evidence type="ECO:0000250" key="1"/>
<evidence type="ECO:0000305" key="2"/>